<protein>
    <recommendedName>
        <fullName evidence="4">Probable (S)-ureidoglycine aminohydrolase</fullName>
        <shortName evidence="4">OsUGLYAH</shortName>
        <ecNumber evidence="3">3.5.3.26</ecNumber>
    </recommendedName>
</protein>
<dbReference type="EC" id="3.5.3.26" evidence="3"/>
<dbReference type="EMBL" id="AP003864">
    <property type="protein sequence ID" value="BAC83197.1"/>
    <property type="molecule type" value="Genomic_DNA"/>
</dbReference>
<dbReference type="EMBL" id="AP008213">
    <property type="protein sequence ID" value="BAF21606.1"/>
    <property type="molecule type" value="Genomic_DNA"/>
</dbReference>
<dbReference type="EMBL" id="AP014963">
    <property type="protein sequence ID" value="BAT01587.1"/>
    <property type="molecule type" value="Genomic_DNA"/>
</dbReference>
<dbReference type="EMBL" id="CM000144">
    <property type="protein sequence ID" value="EEE67206.1"/>
    <property type="molecule type" value="Genomic_DNA"/>
</dbReference>
<dbReference type="EMBL" id="AK060721">
    <property type="protein sequence ID" value="BAG87551.1"/>
    <property type="molecule type" value="mRNA"/>
</dbReference>
<dbReference type="EMBL" id="AK073883">
    <property type="protein sequence ID" value="BAG93690.1"/>
    <property type="molecule type" value="mRNA"/>
</dbReference>
<dbReference type="EMBL" id="AK119204">
    <property type="protein sequence ID" value="BAG99577.1"/>
    <property type="molecule type" value="mRNA"/>
</dbReference>
<dbReference type="RefSeq" id="XP_015644616.1">
    <property type="nucleotide sequence ID" value="XM_015789130.1"/>
</dbReference>
<dbReference type="SMR" id="Q7F1K9"/>
<dbReference type="FunCoup" id="Q7F1K9">
    <property type="interactions" value="644"/>
</dbReference>
<dbReference type="STRING" id="39947.Q7F1K9"/>
<dbReference type="PaxDb" id="39947-Q7F1K9"/>
<dbReference type="EnsemblPlants" id="Os07t0495000-01">
    <property type="protein sequence ID" value="Os07t0495000-01"/>
    <property type="gene ID" value="Os07g0495000"/>
</dbReference>
<dbReference type="Gramene" id="Os07t0495000-01">
    <property type="protein sequence ID" value="Os07t0495000-01"/>
    <property type="gene ID" value="Os07g0495000"/>
</dbReference>
<dbReference type="KEGG" id="dosa:Os07g0495000"/>
<dbReference type="eggNOG" id="ENOG502QS1M">
    <property type="taxonomic scope" value="Eukaryota"/>
</dbReference>
<dbReference type="HOGENOM" id="CLU_056083_1_0_1"/>
<dbReference type="InParanoid" id="Q7F1K9"/>
<dbReference type="OMA" id="PPLYWKV"/>
<dbReference type="OrthoDB" id="4965688at2759"/>
<dbReference type="PlantReactome" id="R-OSA-1119502">
    <property type="pathway name" value="Allantoin degradation"/>
</dbReference>
<dbReference type="Proteomes" id="UP000000763">
    <property type="component" value="Chromosome 7"/>
</dbReference>
<dbReference type="Proteomes" id="UP000007752">
    <property type="component" value="Chromosome 7"/>
</dbReference>
<dbReference type="Proteomes" id="UP000059680">
    <property type="component" value="Chromosome 7"/>
</dbReference>
<dbReference type="GO" id="GO:0005783">
    <property type="term" value="C:endoplasmic reticulum"/>
    <property type="evidence" value="ECO:0007669"/>
    <property type="project" value="UniProtKB-SubCell"/>
</dbReference>
<dbReference type="GO" id="GO:0046872">
    <property type="term" value="F:metal ion binding"/>
    <property type="evidence" value="ECO:0007669"/>
    <property type="project" value="UniProtKB-KW"/>
</dbReference>
<dbReference type="GO" id="GO:0071522">
    <property type="term" value="F:ureidoglycine aminohydrolase activity"/>
    <property type="evidence" value="ECO:0000314"/>
    <property type="project" value="UniProtKB"/>
</dbReference>
<dbReference type="GO" id="GO:0000256">
    <property type="term" value="P:allantoin catabolic process"/>
    <property type="evidence" value="ECO:0000304"/>
    <property type="project" value="UniProtKB"/>
</dbReference>
<dbReference type="GO" id="GO:0006145">
    <property type="term" value="P:purine nucleobase catabolic process"/>
    <property type="evidence" value="ECO:0007669"/>
    <property type="project" value="EnsemblPlants"/>
</dbReference>
<dbReference type="GO" id="GO:0010136">
    <property type="term" value="P:ureide catabolic process"/>
    <property type="evidence" value="ECO:0007669"/>
    <property type="project" value="EnsemblPlants"/>
</dbReference>
<dbReference type="CDD" id="cd02212">
    <property type="entry name" value="cupin_UGlyAH_C"/>
    <property type="match status" value="1"/>
</dbReference>
<dbReference type="CDD" id="cd02211">
    <property type="entry name" value="cupin_UGlyAH_N"/>
    <property type="match status" value="1"/>
</dbReference>
<dbReference type="FunFam" id="2.60.120.10:FF:000137">
    <property type="entry name" value="(S)-ureidoglycine aminohydrolase"/>
    <property type="match status" value="1"/>
</dbReference>
<dbReference type="Gene3D" id="2.60.120.10">
    <property type="entry name" value="Jelly Rolls"/>
    <property type="match status" value="1"/>
</dbReference>
<dbReference type="InterPro" id="IPR013096">
    <property type="entry name" value="Cupin_2"/>
</dbReference>
<dbReference type="InterPro" id="IPR014710">
    <property type="entry name" value="RmlC-like_jellyroll"/>
</dbReference>
<dbReference type="InterPro" id="IPR011051">
    <property type="entry name" value="RmlC_Cupin_sf"/>
</dbReference>
<dbReference type="InterPro" id="IPR017627">
    <property type="entry name" value="UGHY"/>
</dbReference>
<dbReference type="InterPro" id="IPR044697">
    <property type="entry name" value="UGlyAH_cupin_C"/>
</dbReference>
<dbReference type="InterPro" id="IPR044704">
    <property type="entry name" value="UGlyAH_cupin_N"/>
</dbReference>
<dbReference type="NCBIfam" id="TIGR03214">
    <property type="entry name" value="ura-cupin"/>
    <property type="match status" value="1"/>
</dbReference>
<dbReference type="PANTHER" id="PTHR34571">
    <property type="entry name" value="(S)-UREIDOGLYCINE AMINOHYDROLASE"/>
    <property type="match status" value="1"/>
</dbReference>
<dbReference type="PANTHER" id="PTHR34571:SF1">
    <property type="entry name" value="(S)-UREIDOGLYCINE AMINOHYDROLASE"/>
    <property type="match status" value="1"/>
</dbReference>
<dbReference type="Pfam" id="PF07883">
    <property type="entry name" value="Cupin_2"/>
    <property type="match status" value="1"/>
</dbReference>
<dbReference type="SUPFAM" id="SSF51182">
    <property type="entry name" value="RmlC-like cupins"/>
    <property type="match status" value="1"/>
</dbReference>
<sequence length="309" mass="34106">MMLPRLLLLVVASALPLASVAAGAVGVGEGFCSAEPSAASGGCSGVRPPLYWKATNPTLAPAHLQDLPGFTRSVYKRDHALITPESHVFSPLPDWINTLGAYLISPAIGAHFTMYLAKMHDGSKSALPPKGVERLIFVLQGSILLSEESGNTHTLLVDSYAYLPANMKHSVISDEVTTLVIFERRYTTIEGYHPDLIVGSTDKQPLLETPGEVFELRKLLPTSLPYDFNIHIMDFQPGEYLNVKEVHYNQHGLLLLEGQGIYRLGDSWYPVQSGDTIWMAPFVPQWYAALGKTKTRYLLYKDVNRDPLI</sequence>
<comment type="function">
    <text evidence="3">Involved in the catabolism of purine nucleotides. The sequential activity of AAH, UGLYAH and UAH allows a complete purine breakdown without the intermediate generation of urea.</text>
</comment>
<comment type="catalytic activity">
    <reaction evidence="3">
        <text>(S)-2-ureidoglycine + H2O = (S)-ureidoglycolate + NH4(+)</text>
        <dbReference type="Rhea" id="RHEA:25241"/>
        <dbReference type="ChEBI" id="CHEBI:15377"/>
        <dbReference type="ChEBI" id="CHEBI:28938"/>
        <dbReference type="ChEBI" id="CHEBI:57296"/>
        <dbReference type="ChEBI" id="CHEBI:59947"/>
        <dbReference type="EC" id="3.5.3.26"/>
    </reaction>
</comment>
<comment type="cofactor">
    <cofactor evidence="1">
        <name>Mn(2+)</name>
        <dbReference type="ChEBI" id="CHEBI:29035"/>
    </cofactor>
</comment>
<comment type="subunit">
    <text evidence="1">Homooctamer.</text>
</comment>
<comment type="subcellular location">
    <subcellularLocation>
        <location evidence="1">Endoplasmic reticulum</location>
    </subcellularLocation>
</comment>
<comment type="similarity">
    <text evidence="5">Belongs to the UGHY family.</text>
</comment>
<feature type="signal peptide" evidence="2">
    <location>
        <begin position="1"/>
        <end position="22"/>
    </location>
</feature>
<feature type="chain" id="PRO_0000423445" description="Probable (S)-ureidoglycine aminohydrolase">
    <location>
        <begin position="23"/>
        <end position="309"/>
    </location>
</feature>
<feature type="binding site" evidence="1">
    <location>
        <position position="245"/>
    </location>
    <ligand>
        <name>Mn(2+)</name>
        <dbReference type="ChEBI" id="CHEBI:29035"/>
    </ligand>
</feature>
<feature type="binding site" evidence="1">
    <location>
        <position position="245"/>
    </location>
    <ligand>
        <name>substrate</name>
    </ligand>
</feature>
<feature type="binding site" evidence="1">
    <location>
        <position position="247"/>
    </location>
    <ligand>
        <name>Mn(2+)</name>
        <dbReference type="ChEBI" id="CHEBI:29035"/>
    </ligand>
</feature>
<feature type="binding site" evidence="1">
    <location>
        <position position="251"/>
    </location>
    <ligand>
        <name>Mn(2+)</name>
        <dbReference type="ChEBI" id="CHEBI:29035"/>
    </ligand>
</feature>
<feature type="binding site" evidence="1">
    <location>
        <position position="285"/>
    </location>
    <ligand>
        <name>Mn(2+)</name>
        <dbReference type="ChEBI" id="CHEBI:29035"/>
    </ligand>
</feature>
<feature type="binding site" evidence="1">
    <location>
        <position position="285"/>
    </location>
    <ligand>
        <name>substrate</name>
    </ligand>
</feature>
<feature type="binding site" evidence="1">
    <location>
        <position position="297"/>
    </location>
    <ligand>
        <name>substrate</name>
    </ligand>
</feature>
<feature type="binding site" evidence="1">
    <location>
        <position position="301"/>
    </location>
    <ligand>
        <name>substrate</name>
    </ligand>
</feature>
<organism>
    <name type="scientific">Oryza sativa subsp. japonica</name>
    <name type="common">Rice</name>
    <dbReference type="NCBI Taxonomy" id="39947"/>
    <lineage>
        <taxon>Eukaryota</taxon>
        <taxon>Viridiplantae</taxon>
        <taxon>Streptophyta</taxon>
        <taxon>Embryophyta</taxon>
        <taxon>Tracheophyta</taxon>
        <taxon>Spermatophyta</taxon>
        <taxon>Magnoliopsida</taxon>
        <taxon>Liliopsida</taxon>
        <taxon>Poales</taxon>
        <taxon>Poaceae</taxon>
        <taxon>BOP clade</taxon>
        <taxon>Oryzoideae</taxon>
        <taxon>Oryzeae</taxon>
        <taxon>Oryzinae</taxon>
        <taxon>Oryza</taxon>
        <taxon>Oryza sativa</taxon>
    </lineage>
</organism>
<gene>
    <name type="primary">UGLYAH</name>
    <name type="synonym">UGHY</name>
    <name type="ordered locus">Os07g0495000</name>
    <name type="ordered locus">LOC_Os07g31270</name>
    <name type="ORF">OJ1058_B11.119</name>
    <name type="ORF">OsJ_24321</name>
</gene>
<name>UGHY_ORYSJ</name>
<accession>Q7F1K9</accession>
<accession>A0A0P0X6Z2</accession>
<reference key="1">
    <citation type="journal article" date="2005" name="Nature">
        <title>The map-based sequence of the rice genome.</title>
        <authorList>
            <consortium name="International rice genome sequencing project (IRGSP)"/>
        </authorList>
    </citation>
    <scope>NUCLEOTIDE SEQUENCE [LARGE SCALE GENOMIC DNA]</scope>
    <source>
        <strain>cv. Nipponbare</strain>
    </source>
</reference>
<reference key="2">
    <citation type="journal article" date="2008" name="Nucleic Acids Res.">
        <title>The rice annotation project database (RAP-DB): 2008 update.</title>
        <authorList>
            <consortium name="The rice annotation project (RAP)"/>
        </authorList>
    </citation>
    <scope>GENOME REANNOTATION</scope>
    <source>
        <strain>cv. Nipponbare</strain>
    </source>
</reference>
<reference key="3">
    <citation type="journal article" date="2013" name="Rice">
        <title>Improvement of the Oryza sativa Nipponbare reference genome using next generation sequence and optical map data.</title>
        <authorList>
            <person name="Kawahara Y."/>
            <person name="de la Bastide M."/>
            <person name="Hamilton J.P."/>
            <person name="Kanamori H."/>
            <person name="McCombie W.R."/>
            <person name="Ouyang S."/>
            <person name="Schwartz D.C."/>
            <person name="Tanaka T."/>
            <person name="Wu J."/>
            <person name="Zhou S."/>
            <person name="Childs K.L."/>
            <person name="Davidson R.M."/>
            <person name="Lin H."/>
            <person name="Quesada-Ocampo L."/>
            <person name="Vaillancourt B."/>
            <person name="Sakai H."/>
            <person name="Lee S.S."/>
            <person name="Kim J."/>
            <person name="Numa H."/>
            <person name="Itoh T."/>
            <person name="Buell C.R."/>
            <person name="Matsumoto T."/>
        </authorList>
    </citation>
    <scope>GENOME REANNOTATION</scope>
    <source>
        <strain>cv. Nipponbare</strain>
    </source>
</reference>
<reference key="4">
    <citation type="journal article" date="2005" name="PLoS Biol.">
        <title>The genomes of Oryza sativa: a history of duplications.</title>
        <authorList>
            <person name="Yu J."/>
            <person name="Wang J."/>
            <person name="Lin W."/>
            <person name="Li S."/>
            <person name="Li H."/>
            <person name="Zhou J."/>
            <person name="Ni P."/>
            <person name="Dong W."/>
            <person name="Hu S."/>
            <person name="Zeng C."/>
            <person name="Zhang J."/>
            <person name="Zhang Y."/>
            <person name="Li R."/>
            <person name="Xu Z."/>
            <person name="Li S."/>
            <person name="Li X."/>
            <person name="Zheng H."/>
            <person name="Cong L."/>
            <person name="Lin L."/>
            <person name="Yin J."/>
            <person name="Geng J."/>
            <person name="Li G."/>
            <person name="Shi J."/>
            <person name="Liu J."/>
            <person name="Lv H."/>
            <person name="Li J."/>
            <person name="Wang J."/>
            <person name="Deng Y."/>
            <person name="Ran L."/>
            <person name="Shi X."/>
            <person name="Wang X."/>
            <person name="Wu Q."/>
            <person name="Li C."/>
            <person name="Ren X."/>
            <person name="Wang J."/>
            <person name="Wang X."/>
            <person name="Li D."/>
            <person name="Liu D."/>
            <person name="Zhang X."/>
            <person name="Ji Z."/>
            <person name="Zhao W."/>
            <person name="Sun Y."/>
            <person name="Zhang Z."/>
            <person name="Bao J."/>
            <person name="Han Y."/>
            <person name="Dong L."/>
            <person name="Ji J."/>
            <person name="Chen P."/>
            <person name="Wu S."/>
            <person name="Liu J."/>
            <person name="Xiao Y."/>
            <person name="Bu D."/>
            <person name="Tan J."/>
            <person name="Yang L."/>
            <person name="Ye C."/>
            <person name="Zhang J."/>
            <person name="Xu J."/>
            <person name="Zhou Y."/>
            <person name="Yu Y."/>
            <person name="Zhang B."/>
            <person name="Zhuang S."/>
            <person name="Wei H."/>
            <person name="Liu B."/>
            <person name="Lei M."/>
            <person name="Yu H."/>
            <person name="Li Y."/>
            <person name="Xu H."/>
            <person name="Wei S."/>
            <person name="He X."/>
            <person name="Fang L."/>
            <person name="Zhang Z."/>
            <person name="Zhang Y."/>
            <person name="Huang X."/>
            <person name="Su Z."/>
            <person name="Tong W."/>
            <person name="Li J."/>
            <person name="Tong Z."/>
            <person name="Li S."/>
            <person name="Ye J."/>
            <person name="Wang L."/>
            <person name="Fang L."/>
            <person name="Lei T."/>
            <person name="Chen C.-S."/>
            <person name="Chen H.-C."/>
            <person name="Xu Z."/>
            <person name="Li H."/>
            <person name="Huang H."/>
            <person name="Zhang F."/>
            <person name="Xu H."/>
            <person name="Li N."/>
            <person name="Zhao C."/>
            <person name="Li S."/>
            <person name="Dong L."/>
            <person name="Huang Y."/>
            <person name="Li L."/>
            <person name="Xi Y."/>
            <person name="Qi Q."/>
            <person name="Li W."/>
            <person name="Zhang B."/>
            <person name="Hu W."/>
            <person name="Zhang Y."/>
            <person name="Tian X."/>
            <person name="Jiao Y."/>
            <person name="Liang X."/>
            <person name="Jin J."/>
            <person name="Gao L."/>
            <person name="Zheng W."/>
            <person name="Hao B."/>
            <person name="Liu S.-M."/>
            <person name="Wang W."/>
            <person name="Yuan L."/>
            <person name="Cao M."/>
            <person name="McDermott J."/>
            <person name="Samudrala R."/>
            <person name="Wang J."/>
            <person name="Wong G.K.-S."/>
            <person name="Yang H."/>
        </authorList>
    </citation>
    <scope>NUCLEOTIDE SEQUENCE [LARGE SCALE GENOMIC DNA]</scope>
    <source>
        <strain>cv. Nipponbare</strain>
    </source>
</reference>
<reference key="5">
    <citation type="journal article" date="2003" name="Science">
        <title>Collection, mapping, and annotation of over 28,000 cDNA clones from japonica rice.</title>
        <authorList>
            <consortium name="The rice full-length cDNA consortium"/>
        </authorList>
    </citation>
    <scope>NUCLEOTIDE SEQUENCE [LARGE SCALE MRNA]</scope>
    <source>
        <strain>cv. Nipponbare</strain>
    </source>
</reference>
<reference key="6">
    <citation type="journal article" date="2010" name="Nat. Chem. Biol.">
        <title>Ureide catabolism in Arabidopsis thaliana and Escherichia coli.</title>
        <authorList>
            <person name="Werner A.K."/>
            <person name="Romeis T."/>
            <person name="Witte C.P."/>
        </authorList>
    </citation>
    <scope>IDENTIFICATION</scope>
</reference>
<reference key="7">
    <citation type="journal article" date="2013" name="Plant Physiol.">
        <title>The ureide-degrading reactions of purine ring catabolism employ three amidohydrolases and one aminohydrolase in Arabidopsis, soybean, and rice.</title>
        <authorList>
            <person name="Werner A.K."/>
            <person name="Medina-Escobar N."/>
            <person name="Zulawski M."/>
            <person name="Sparkes I.A."/>
            <person name="Cao F.Q."/>
            <person name="Witte C.P."/>
        </authorList>
    </citation>
    <scope>FUNCTION</scope>
    <scope>CATALYTIC ACTIVITY</scope>
</reference>
<proteinExistence type="evidence at protein level"/>
<keyword id="KW-0256">Endoplasmic reticulum</keyword>
<keyword id="KW-0378">Hydrolase</keyword>
<keyword id="KW-0464">Manganese</keyword>
<keyword id="KW-0479">Metal-binding</keyword>
<keyword id="KW-0659">Purine metabolism</keyword>
<keyword id="KW-1185">Reference proteome</keyword>
<keyword id="KW-0732">Signal</keyword>
<evidence type="ECO:0000250" key="1">
    <source>
        <dbReference type="UniProtKB" id="Q8GXV5"/>
    </source>
</evidence>
<evidence type="ECO:0000255" key="2"/>
<evidence type="ECO:0000269" key="3">
    <source>
    </source>
</evidence>
<evidence type="ECO:0000303" key="4">
    <source>
    </source>
</evidence>
<evidence type="ECO:0000305" key="5"/>